<reference key="1">
    <citation type="journal article" date="2007" name="J. Bacteriol.">
        <title>Genome sequence of Avery's virulent serotype 2 strain D39 of Streptococcus pneumoniae and comparison with that of unencapsulated laboratory strain R6.</title>
        <authorList>
            <person name="Lanie J.A."/>
            <person name="Ng W.-L."/>
            <person name="Kazmierczak K.M."/>
            <person name="Andrzejewski T.M."/>
            <person name="Davidsen T.M."/>
            <person name="Wayne K.J."/>
            <person name="Tettelin H."/>
            <person name="Glass J.I."/>
            <person name="Winkler M.E."/>
        </authorList>
    </citation>
    <scope>NUCLEOTIDE SEQUENCE [LARGE SCALE GENOMIC DNA]</scope>
    <source>
        <strain>D39 / NCTC 7466</strain>
    </source>
</reference>
<name>RL30_STRP2</name>
<organism>
    <name type="scientific">Streptococcus pneumoniae serotype 2 (strain D39 / NCTC 7466)</name>
    <dbReference type="NCBI Taxonomy" id="373153"/>
    <lineage>
        <taxon>Bacteria</taxon>
        <taxon>Bacillati</taxon>
        <taxon>Bacillota</taxon>
        <taxon>Bacilli</taxon>
        <taxon>Lactobacillales</taxon>
        <taxon>Streptococcaceae</taxon>
        <taxon>Streptococcus</taxon>
    </lineage>
</organism>
<evidence type="ECO:0000255" key="1">
    <source>
        <dbReference type="HAMAP-Rule" id="MF_01371"/>
    </source>
</evidence>
<evidence type="ECO:0000305" key="2"/>
<feature type="chain" id="PRO_1000056116" description="Large ribosomal subunit protein uL30">
    <location>
        <begin position="1"/>
        <end position="60"/>
    </location>
</feature>
<comment type="subunit">
    <text evidence="1">Part of the 50S ribosomal subunit.</text>
</comment>
<comment type="similarity">
    <text evidence="1">Belongs to the universal ribosomal protein uL30 family.</text>
</comment>
<keyword id="KW-1185">Reference proteome</keyword>
<keyword id="KW-0687">Ribonucleoprotein</keyword>
<keyword id="KW-0689">Ribosomal protein</keyword>
<protein>
    <recommendedName>
        <fullName evidence="1">Large ribosomal subunit protein uL30</fullName>
    </recommendedName>
    <alternativeName>
        <fullName evidence="2">50S ribosomal protein L30</fullName>
    </alternativeName>
</protein>
<gene>
    <name evidence="1" type="primary">rpmD</name>
    <name type="ordered locus">SPD_0211</name>
</gene>
<sequence length="60" mass="6399">MAQIKITLTKSPIGRIPSQRKTVVALGLGKLNSSVIKEDNAAIRGMITAVSHLVTVEEVN</sequence>
<dbReference type="EMBL" id="CP000410">
    <property type="protein sequence ID" value="ABJ55032.1"/>
    <property type="molecule type" value="Genomic_DNA"/>
</dbReference>
<dbReference type="RefSeq" id="WP_000057241.1">
    <property type="nucleotide sequence ID" value="NZ_JAMLJR010000002.1"/>
</dbReference>
<dbReference type="SMR" id="Q04ML8"/>
<dbReference type="PaxDb" id="373153-SPD_0211"/>
<dbReference type="GeneID" id="93738975"/>
<dbReference type="KEGG" id="spd:SPD_0211"/>
<dbReference type="eggNOG" id="COG1841">
    <property type="taxonomic scope" value="Bacteria"/>
</dbReference>
<dbReference type="HOGENOM" id="CLU_131047_2_1_9"/>
<dbReference type="Proteomes" id="UP000001452">
    <property type="component" value="Chromosome"/>
</dbReference>
<dbReference type="GO" id="GO:0022625">
    <property type="term" value="C:cytosolic large ribosomal subunit"/>
    <property type="evidence" value="ECO:0007669"/>
    <property type="project" value="TreeGrafter"/>
</dbReference>
<dbReference type="GO" id="GO:0003735">
    <property type="term" value="F:structural constituent of ribosome"/>
    <property type="evidence" value="ECO:0007669"/>
    <property type="project" value="InterPro"/>
</dbReference>
<dbReference type="GO" id="GO:0006412">
    <property type="term" value="P:translation"/>
    <property type="evidence" value="ECO:0007669"/>
    <property type="project" value="UniProtKB-UniRule"/>
</dbReference>
<dbReference type="CDD" id="cd01658">
    <property type="entry name" value="Ribosomal_L30"/>
    <property type="match status" value="1"/>
</dbReference>
<dbReference type="FunFam" id="3.30.1390.20:FF:000001">
    <property type="entry name" value="50S ribosomal protein L30"/>
    <property type="match status" value="1"/>
</dbReference>
<dbReference type="Gene3D" id="3.30.1390.20">
    <property type="entry name" value="Ribosomal protein L30, ferredoxin-like fold domain"/>
    <property type="match status" value="1"/>
</dbReference>
<dbReference type="HAMAP" id="MF_01371_B">
    <property type="entry name" value="Ribosomal_uL30_B"/>
    <property type="match status" value="1"/>
</dbReference>
<dbReference type="InterPro" id="IPR036919">
    <property type="entry name" value="Ribo_uL30_ferredoxin-like_sf"/>
</dbReference>
<dbReference type="InterPro" id="IPR005996">
    <property type="entry name" value="Ribosomal_uL30_bac-type"/>
</dbReference>
<dbReference type="InterPro" id="IPR018038">
    <property type="entry name" value="Ribosomal_uL30_CS"/>
</dbReference>
<dbReference type="InterPro" id="IPR016082">
    <property type="entry name" value="Ribosomal_uL30_ferredoxin-like"/>
</dbReference>
<dbReference type="NCBIfam" id="TIGR01308">
    <property type="entry name" value="rpmD_bact"/>
    <property type="match status" value="1"/>
</dbReference>
<dbReference type="PANTHER" id="PTHR15892:SF2">
    <property type="entry name" value="LARGE RIBOSOMAL SUBUNIT PROTEIN UL30M"/>
    <property type="match status" value="1"/>
</dbReference>
<dbReference type="PANTHER" id="PTHR15892">
    <property type="entry name" value="MITOCHONDRIAL RIBOSOMAL PROTEIN L30"/>
    <property type="match status" value="1"/>
</dbReference>
<dbReference type="Pfam" id="PF00327">
    <property type="entry name" value="Ribosomal_L30"/>
    <property type="match status" value="1"/>
</dbReference>
<dbReference type="PIRSF" id="PIRSF002211">
    <property type="entry name" value="Ribosomal_L30_bac-type"/>
    <property type="match status" value="1"/>
</dbReference>
<dbReference type="SUPFAM" id="SSF55129">
    <property type="entry name" value="Ribosomal protein L30p/L7e"/>
    <property type="match status" value="1"/>
</dbReference>
<dbReference type="PROSITE" id="PS00634">
    <property type="entry name" value="RIBOSOMAL_L30"/>
    <property type="match status" value="1"/>
</dbReference>
<proteinExistence type="inferred from homology"/>
<accession>Q04ML8</accession>